<feature type="chain" id="PRO_1000007533" description="Large ribosomal subunit protein uL29">
    <location>
        <begin position="1"/>
        <end position="77"/>
    </location>
</feature>
<keyword id="KW-0687">Ribonucleoprotein</keyword>
<keyword id="KW-0689">Ribosomal protein</keyword>
<sequence>MAVGVSPGELRELSDDELIERLRESKEELFNLRFQMATGQLSNNRRLRVVRQEIARVYTVLRERELGLASGPAGEES</sequence>
<comment type="similarity">
    <text evidence="1">Belongs to the universal ribosomal protein uL29 family.</text>
</comment>
<gene>
    <name evidence="1" type="primary">rpmC</name>
    <name type="ordered locus">Mkms_1038</name>
</gene>
<evidence type="ECO:0000255" key="1">
    <source>
        <dbReference type="HAMAP-Rule" id="MF_00374"/>
    </source>
</evidence>
<evidence type="ECO:0000305" key="2"/>
<accession>A1UBP4</accession>
<protein>
    <recommendedName>
        <fullName evidence="1">Large ribosomal subunit protein uL29</fullName>
    </recommendedName>
    <alternativeName>
        <fullName evidence="2">50S ribosomal protein L29</fullName>
    </alternativeName>
</protein>
<reference key="1">
    <citation type="submission" date="2006-12" db="EMBL/GenBank/DDBJ databases">
        <title>Complete sequence of chromosome of Mycobacterium sp. KMS.</title>
        <authorList>
            <consortium name="US DOE Joint Genome Institute"/>
            <person name="Copeland A."/>
            <person name="Lucas S."/>
            <person name="Lapidus A."/>
            <person name="Barry K."/>
            <person name="Detter J.C."/>
            <person name="Glavina del Rio T."/>
            <person name="Hammon N."/>
            <person name="Israni S."/>
            <person name="Dalin E."/>
            <person name="Tice H."/>
            <person name="Pitluck S."/>
            <person name="Kiss H."/>
            <person name="Brettin T."/>
            <person name="Bruce D."/>
            <person name="Han C."/>
            <person name="Tapia R."/>
            <person name="Gilna P."/>
            <person name="Schmutz J."/>
            <person name="Larimer F."/>
            <person name="Land M."/>
            <person name="Hauser L."/>
            <person name="Kyrpides N."/>
            <person name="Mikhailova N."/>
            <person name="Miller C.D."/>
            <person name="Richardson P."/>
        </authorList>
    </citation>
    <scope>NUCLEOTIDE SEQUENCE [LARGE SCALE GENOMIC DNA]</scope>
    <source>
        <strain>KMS</strain>
    </source>
</reference>
<proteinExistence type="inferred from homology"/>
<name>RL29_MYCSK</name>
<organism>
    <name type="scientific">Mycobacterium sp. (strain KMS)</name>
    <dbReference type="NCBI Taxonomy" id="189918"/>
    <lineage>
        <taxon>Bacteria</taxon>
        <taxon>Bacillati</taxon>
        <taxon>Actinomycetota</taxon>
        <taxon>Actinomycetes</taxon>
        <taxon>Mycobacteriales</taxon>
        <taxon>Mycobacteriaceae</taxon>
        <taxon>Mycobacterium</taxon>
    </lineage>
</organism>
<dbReference type="EMBL" id="CP000518">
    <property type="protein sequence ID" value="ABL90252.1"/>
    <property type="molecule type" value="Genomic_DNA"/>
</dbReference>
<dbReference type="SMR" id="A1UBP4"/>
<dbReference type="STRING" id="189918.Mkms_1038"/>
<dbReference type="KEGG" id="mkm:Mkms_1038"/>
<dbReference type="HOGENOM" id="CLU_158491_3_3_11"/>
<dbReference type="OrthoDB" id="9815192at2"/>
<dbReference type="GO" id="GO:0022625">
    <property type="term" value="C:cytosolic large ribosomal subunit"/>
    <property type="evidence" value="ECO:0007669"/>
    <property type="project" value="TreeGrafter"/>
</dbReference>
<dbReference type="GO" id="GO:0003735">
    <property type="term" value="F:structural constituent of ribosome"/>
    <property type="evidence" value="ECO:0007669"/>
    <property type="project" value="InterPro"/>
</dbReference>
<dbReference type="GO" id="GO:0006412">
    <property type="term" value="P:translation"/>
    <property type="evidence" value="ECO:0007669"/>
    <property type="project" value="UniProtKB-UniRule"/>
</dbReference>
<dbReference type="CDD" id="cd00427">
    <property type="entry name" value="Ribosomal_L29_HIP"/>
    <property type="match status" value="1"/>
</dbReference>
<dbReference type="FunFam" id="1.10.287.310:FF:000001">
    <property type="entry name" value="50S ribosomal protein L29"/>
    <property type="match status" value="1"/>
</dbReference>
<dbReference type="Gene3D" id="1.10.287.310">
    <property type="match status" value="1"/>
</dbReference>
<dbReference type="HAMAP" id="MF_00374">
    <property type="entry name" value="Ribosomal_uL29"/>
    <property type="match status" value="1"/>
</dbReference>
<dbReference type="InterPro" id="IPR050063">
    <property type="entry name" value="Ribosomal_protein_uL29"/>
</dbReference>
<dbReference type="InterPro" id="IPR001854">
    <property type="entry name" value="Ribosomal_uL29"/>
</dbReference>
<dbReference type="InterPro" id="IPR018254">
    <property type="entry name" value="Ribosomal_uL29_CS"/>
</dbReference>
<dbReference type="InterPro" id="IPR036049">
    <property type="entry name" value="Ribosomal_uL29_sf"/>
</dbReference>
<dbReference type="NCBIfam" id="TIGR00012">
    <property type="entry name" value="L29"/>
    <property type="match status" value="1"/>
</dbReference>
<dbReference type="PANTHER" id="PTHR10916">
    <property type="entry name" value="60S RIBOSOMAL PROTEIN L35/50S RIBOSOMAL PROTEIN L29"/>
    <property type="match status" value="1"/>
</dbReference>
<dbReference type="PANTHER" id="PTHR10916:SF0">
    <property type="entry name" value="LARGE RIBOSOMAL SUBUNIT PROTEIN UL29C"/>
    <property type="match status" value="1"/>
</dbReference>
<dbReference type="Pfam" id="PF00831">
    <property type="entry name" value="Ribosomal_L29"/>
    <property type="match status" value="1"/>
</dbReference>
<dbReference type="SUPFAM" id="SSF46561">
    <property type="entry name" value="Ribosomal protein L29 (L29p)"/>
    <property type="match status" value="1"/>
</dbReference>
<dbReference type="PROSITE" id="PS00579">
    <property type="entry name" value="RIBOSOMAL_L29"/>
    <property type="match status" value="1"/>
</dbReference>